<dbReference type="EC" id="5.3.3.2" evidence="1"/>
<dbReference type="EMBL" id="AB037907">
    <property type="protein sequence ID" value="BAB07820.1"/>
    <property type="molecule type" value="Genomic_DNA"/>
</dbReference>
<dbReference type="RefSeq" id="WP_043911621.1">
    <property type="nucleotide sequence ID" value="NZ_JXZB01000002.1"/>
</dbReference>
<dbReference type="SMR" id="Q9KWF6"/>
<dbReference type="STRING" id="2064.TR51_15670"/>
<dbReference type="OrthoDB" id="9795032at2"/>
<dbReference type="GO" id="GO:0005737">
    <property type="term" value="C:cytoplasm"/>
    <property type="evidence" value="ECO:0007669"/>
    <property type="project" value="UniProtKB-SubCell"/>
</dbReference>
<dbReference type="GO" id="GO:0010181">
    <property type="term" value="F:FMN binding"/>
    <property type="evidence" value="ECO:0007669"/>
    <property type="project" value="UniProtKB-UniRule"/>
</dbReference>
<dbReference type="GO" id="GO:0004452">
    <property type="term" value="F:isopentenyl-diphosphate delta-isomerase activity"/>
    <property type="evidence" value="ECO:0007669"/>
    <property type="project" value="UniProtKB-UniRule"/>
</dbReference>
<dbReference type="GO" id="GO:0000287">
    <property type="term" value="F:magnesium ion binding"/>
    <property type="evidence" value="ECO:0007669"/>
    <property type="project" value="UniProtKB-UniRule"/>
</dbReference>
<dbReference type="GO" id="GO:0070402">
    <property type="term" value="F:NADPH binding"/>
    <property type="evidence" value="ECO:0007669"/>
    <property type="project" value="UniProtKB-UniRule"/>
</dbReference>
<dbReference type="GO" id="GO:0016491">
    <property type="term" value="F:oxidoreductase activity"/>
    <property type="evidence" value="ECO:0007669"/>
    <property type="project" value="InterPro"/>
</dbReference>
<dbReference type="GO" id="GO:0008299">
    <property type="term" value="P:isoprenoid biosynthetic process"/>
    <property type="evidence" value="ECO:0007669"/>
    <property type="project" value="UniProtKB-UniRule"/>
</dbReference>
<dbReference type="CDD" id="cd02811">
    <property type="entry name" value="IDI-2_FMN"/>
    <property type="match status" value="1"/>
</dbReference>
<dbReference type="Gene3D" id="3.20.20.70">
    <property type="entry name" value="Aldolase class I"/>
    <property type="match status" value="1"/>
</dbReference>
<dbReference type="HAMAP" id="MF_00354">
    <property type="entry name" value="Idi_2"/>
    <property type="match status" value="1"/>
</dbReference>
<dbReference type="InterPro" id="IPR013785">
    <property type="entry name" value="Aldolase_TIM"/>
</dbReference>
<dbReference type="InterPro" id="IPR000262">
    <property type="entry name" value="FMN-dep_DH"/>
</dbReference>
<dbReference type="InterPro" id="IPR011179">
    <property type="entry name" value="IPdP_isomerase"/>
</dbReference>
<dbReference type="NCBIfam" id="TIGR02151">
    <property type="entry name" value="IPP_isom_2"/>
    <property type="match status" value="1"/>
</dbReference>
<dbReference type="PANTHER" id="PTHR43665">
    <property type="entry name" value="ISOPENTENYL-DIPHOSPHATE DELTA-ISOMERASE"/>
    <property type="match status" value="1"/>
</dbReference>
<dbReference type="PANTHER" id="PTHR43665:SF1">
    <property type="entry name" value="ISOPENTENYL-DIPHOSPHATE DELTA-ISOMERASE"/>
    <property type="match status" value="1"/>
</dbReference>
<dbReference type="Pfam" id="PF01070">
    <property type="entry name" value="FMN_dh"/>
    <property type="match status" value="1"/>
</dbReference>
<dbReference type="PIRSF" id="PIRSF003314">
    <property type="entry name" value="IPP_isomerase"/>
    <property type="match status" value="1"/>
</dbReference>
<dbReference type="SUPFAM" id="SSF51395">
    <property type="entry name" value="FMN-linked oxidoreductases"/>
    <property type="match status" value="1"/>
</dbReference>
<comment type="function">
    <text evidence="1">Involved in the biosynthesis of isoprenoids. Catalyzes the 1,3-allylic rearrangement of the homoallylic substrate isopentenyl (IPP) to its allylic isomer, dimethylallyl diphosphate (DMAPP).</text>
</comment>
<comment type="catalytic activity">
    <reaction evidence="1">
        <text>isopentenyl diphosphate = dimethylallyl diphosphate</text>
        <dbReference type="Rhea" id="RHEA:23284"/>
        <dbReference type="ChEBI" id="CHEBI:57623"/>
        <dbReference type="ChEBI" id="CHEBI:128769"/>
        <dbReference type="EC" id="5.3.3.2"/>
    </reaction>
</comment>
<comment type="cofactor">
    <cofactor evidence="1">
        <name>FMN</name>
        <dbReference type="ChEBI" id="CHEBI:58210"/>
    </cofactor>
</comment>
<comment type="cofactor">
    <cofactor evidence="1">
        <name>NADPH</name>
        <dbReference type="ChEBI" id="CHEBI:57783"/>
    </cofactor>
</comment>
<comment type="cofactor">
    <cofactor evidence="1">
        <name>Mg(2+)</name>
        <dbReference type="ChEBI" id="CHEBI:18420"/>
    </cofactor>
</comment>
<comment type="subunit">
    <text evidence="1">Homooctamer. Dimer of tetramers.</text>
</comment>
<comment type="subcellular location">
    <subcellularLocation>
        <location evidence="1">Cytoplasm</location>
    </subcellularLocation>
</comment>
<comment type="similarity">
    <text evidence="1">Belongs to the IPP isomerase type 2 family.</text>
</comment>
<protein>
    <recommendedName>
        <fullName evidence="1">Isopentenyl-diphosphate delta-isomerase</fullName>
        <shortName evidence="1">IPP isomerase</shortName>
        <ecNumber evidence="1">5.3.3.2</ecNumber>
    </recommendedName>
    <alternativeName>
        <fullName evidence="1">Isopentenyl diphosphate:dimethylallyl diphosphate isomerase</fullName>
    </alternativeName>
    <alternativeName>
        <fullName evidence="1">Isopentenyl pyrophosphate isomerase</fullName>
    </alternativeName>
    <alternativeName>
        <fullName evidence="1">Type 2 isopentenyl diphosphate isomerase</fullName>
        <shortName evidence="1">IDI-2</shortName>
    </alternativeName>
</protein>
<evidence type="ECO:0000255" key="1">
    <source>
        <dbReference type="HAMAP-Rule" id="MF_00354"/>
    </source>
</evidence>
<evidence type="ECO:0000256" key="2">
    <source>
        <dbReference type="SAM" id="MobiDB-lite"/>
    </source>
</evidence>
<gene>
    <name evidence="1" type="primary">fni</name>
</gene>
<proteinExistence type="inferred from homology"/>
<accession>Q9KWF6</accession>
<name>IDI2_KITGR</name>
<organism>
    <name type="scientific">Kitasatospora griseola</name>
    <name type="common">Streptomyces griseolosporeus</name>
    <dbReference type="NCBI Taxonomy" id="2064"/>
    <lineage>
        <taxon>Bacteria</taxon>
        <taxon>Bacillati</taxon>
        <taxon>Actinomycetota</taxon>
        <taxon>Actinomycetes</taxon>
        <taxon>Kitasatosporales</taxon>
        <taxon>Streptomycetaceae</taxon>
        <taxon>Kitasatospora</taxon>
    </lineage>
</organism>
<keyword id="KW-0963">Cytoplasm</keyword>
<keyword id="KW-0285">Flavoprotein</keyword>
<keyword id="KW-0288">FMN</keyword>
<keyword id="KW-0413">Isomerase</keyword>
<keyword id="KW-0414">Isoprene biosynthesis</keyword>
<keyword id="KW-0460">Magnesium</keyword>
<keyword id="KW-0479">Metal-binding</keyword>
<keyword id="KW-0521">NADP</keyword>
<reference key="1">
    <citation type="journal article" date="2002" name="Biosci. Biotechnol. Biochem.">
        <title>Growth-phase dependent expression of the mevalonate pathway in a terpenoid antibiotic-producing Streptomyces strain.</title>
        <authorList>
            <person name="Hamano Y."/>
            <person name="Dairi T."/>
            <person name="Yamamoto M."/>
            <person name="Kuzuyama T."/>
            <person name="Itoh N."/>
            <person name="Seto H."/>
        </authorList>
    </citation>
    <scope>NUCLEOTIDE SEQUENCE [GENOMIC DNA]</scope>
    <source>
        <strain>MF730-N6</strain>
    </source>
</reference>
<sequence>MSSAQRKDDHVRLATEQQRAHSGRNQFDDVSFVHHALAGIDRPDVRLATTFAGITWRLPLYINAMTGGSAKTGAINRDLAVAARETGAAIASGSMHAFFRDPSCADTFRVLRTENPDGFVMANVNATASVDNARRAVDLIEANALQIHLNTAQETPMPEGDRSFGSWPAQIAKITAAVDVPVIVKEVGNGLSRQTLLALPDLGVRVADVSGRGGTDFARIENSRRPLGDYAFLHGWGQSTPACLLDAQDVGFPLLASGGIRNPLDVARALALGAGAVGSSGVFLRTLIDGGVSALVAQISTWLDQLAALQTMLGARTPADLTRCDVLIHGPLRSFCTDRGIDIGRFARRSSSADIRSEMTGSTR</sequence>
<feature type="chain" id="PRO_0000134409" description="Isopentenyl-diphosphate delta-isomerase">
    <location>
        <begin position="1"/>
        <end position="364"/>
    </location>
</feature>
<feature type="region of interest" description="Disordered" evidence="2">
    <location>
        <begin position="1"/>
        <end position="24"/>
    </location>
</feature>
<feature type="compositionally biased region" description="Basic and acidic residues" evidence="2">
    <location>
        <begin position="1"/>
        <end position="13"/>
    </location>
</feature>
<feature type="binding site" evidence="1">
    <location>
        <begin position="6"/>
        <end position="7"/>
    </location>
    <ligand>
        <name>substrate</name>
    </ligand>
</feature>
<feature type="binding site" evidence="1">
    <location>
        <begin position="64"/>
        <end position="66"/>
    </location>
    <ligand>
        <name>FMN</name>
        <dbReference type="ChEBI" id="CHEBI:58210"/>
    </ligand>
</feature>
<feature type="binding site" evidence="1">
    <location>
        <begin position="94"/>
        <end position="96"/>
    </location>
    <ligand>
        <name>substrate</name>
    </ligand>
</feature>
<feature type="binding site" evidence="1">
    <location>
        <position position="94"/>
    </location>
    <ligand>
        <name>FMN</name>
        <dbReference type="ChEBI" id="CHEBI:58210"/>
    </ligand>
</feature>
<feature type="binding site" evidence="1">
    <location>
        <position position="123"/>
    </location>
    <ligand>
        <name>FMN</name>
        <dbReference type="ChEBI" id="CHEBI:58210"/>
    </ligand>
</feature>
<feature type="binding site" evidence="1">
    <location>
        <position position="153"/>
    </location>
    <ligand>
        <name>substrate</name>
    </ligand>
</feature>
<feature type="binding site" evidence="1">
    <location>
        <position position="154"/>
    </location>
    <ligand>
        <name>Mg(2+)</name>
        <dbReference type="ChEBI" id="CHEBI:18420"/>
    </ligand>
</feature>
<feature type="binding site" evidence="1">
    <location>
        <position position="185"/>
    </location>
    <ligand>
        <name>FMN</name>
        <dbReference type="ChEBI" id="CHEBI:58210"/>
    </ligand>
</feature>
<feature type="binding site" evidence="1">
    <location>
        <position position="210"/>
    </location>
    <ligand>
        <name>FMN</name>
        <dbReference type="ChEBI" id="CHEBI:58210"/>
    </ligand>
</feature>
<feature type="binding site" evidence="1">
    <location>
        <position position="215"/>
    </location>
    <ligand>
        <name>FMN</name>
        <dbReference type="ChEBI" id="CHEBI:58210"/>
    </ligand>
</feature>
<feature type="binding site" evidence="1">
    <location>
        <begin position="259"/>
        <end position="261"/>
    </location>
    <ligand>
        <name>FMN</name>
        <dbReference type="ChEBI" id="CHEBI:58210"/>
    </ligand>
</feature>
<feature type="binding site" evidence="1">
    <location>
        <begin position="280"/>
        <end position="281"/>
    </location>
    <ligand>
        <name>FMN</name>
        <dbReference type="ChEBI" id="CHEBI:58210"/>
    </ligand>
</feature>